<organism>
    <name type="scientific">Methanopyrus kandleri (strain AV19 / DSM 6324 / JCM 9639 / NBRC 100938)</name>
    <dbReference type="NCBI Taxonomy" id="190192"/>
    <lineage>
        <taxon>Archaea</taxon>
        <taxon>Methanobacteriati</taxon>
        <taxon>Methanobacteriota</taxon>
        <taxon>Methanomada group</taxon>
        <taxon>Methanopyri</taxon>
        <taxon>Methanopyrales</taxon>
        <taxon>Methanopyraceae</taxon>
        <taxon>Methanopyrus</taxon>
    </lineage>
</organism>
<protein>
    <recommendedName>
        <fullName evidence="1">Large ribosomal subunit protein eL43</fullName>
    </recommendedName>
    <alternativeName>
        <fullName evidence="2">50S ribosomal protein L37Ae</fullName>
    </alternativeName>
    <alternativeName>
        <fullName evidence="1">Ribosomal protein L43e</fullName>
    </alternativeName>
</protein>
<accession>Q8TYC3</accession>
<keyword id="KW-0479">Metal-binding</keyword>
<keyword id="KW-1185">Reference proteome</keyword>
<keyword id="KW-0687">Ribonucleoprotein</keyword>
<keyword id="KW-0689">Ribosomal protein</keyword>
<keyword id="KW-0694">RNA-binding</keyword>
<keyword id="KW-0699">rRNA-binding</keyword>
<keyword id="KW-0862">Zinc</keyword>
<keyword id="KW-0863">Zinc-finger</keyword>
<comment type="function">
    <text evidence="1">Binds to the 23S rRNA.</text>
</comment>
<comment type="cofactor">
    <cofactor evidence="1">
        <name>Zn(2+)</name>
        <dbReference type="ChEBI" id="CHEBI:29105"/>
    </cofactor>
    <text evidence="1">Binds 1 zinc ion per subunit.</text>
</comment>
<comment type="subunit">
    <text evidence="1">Part of the 50S ribosomal subunit.</text>
</comment>
<comment type="similarity">
    <text evidence="1">Belongs to the eukaryotic ribosomal protein eL43 family. Putative zinc-binding subfamily.</text>
</comment>
<gene>
    <name evidence="1" type="primary">rpl37ae</name>
    <name type="ordered locus">MK0379</name>
</gene>
<sequence>MGRTKKVGPAGRFGPRYGMRIRRRVAEIESVQRQKHECPVCHKRAVKRVGTGIWRCTKCGAEFTGGAYYPETEAQRIVRRAIRKALEEK</sequence>
<feature type="chain" id="PRO_0000139844" description="Large ribosomal subunit protein eL43">
    <location>
        <begin position="1"/>
        <end position="89"/>
    </location>
</feature>
<feature type="zinc finger region" description="C4-type" evidence="1">
    <location>
        <begin position="38"/>
        <end position="59"/>
    </location>
</feature>
<feature type="binding site" evidence="1">
    <location>
        <position position="38"/>
    </location>
    <ligand>
        <name>Zn(2+)</name>
        <dbReference type="ChEBI" id="CHEBI:29105"/>
    </ligand>
</feature>
<feature type="binding site" evidence="1">
    <location>
        <position position="41"/>
    </location>
    <ligand>
        <name>Zn(2+)</name>
        <dbReference type="ChEBI" id="CHEBI:29105"/>
    </ligand>
</feature>
<feature type="binding site" evidence="1">
    <location>
        <position position="56"/>
    </location>
    <ligand>
        <name>Zn(2+)</name>
        <dbReference type="ChEBI" id="CHEBI:29105"/>
    </ligand>
</feature>
<feature type="binding site" evidence="1">
    <location>
        <position position="59"/>
    </location>
    <ligand>
        <name>Zn(2+)</name>
        <dbReference type="ChEBI" id="CHEBI:29105"/>
    </ligand>
</feature>
<dbReference type="EMBL" id="AE009439">
    <property type="protein sequence ID" value="AAM01594.1"/>
    <property type="molecule type" value="Genomic_DNA"/>
</dbReference>
<dbReference type="SMR" id="Q8TYC3"/>
<dbReference type="FunCoup" id="Q8TYC3">
    <property type="interactions" value="121"/>
</dbReference>
<dbReference type="STRING" id="190192.MK0379"/>
<dbReference type="PaxDb" id="190192-MK0379"/>
<dbReference type="EnsemblBacteria" id="AAM01594">
    <property type="protein sequence ID" value="AAM01594"/>
    <property type="gene ID" value="MK0379"/>
</dbReference>
<dbReference type="KEGG" id="mka:MK0379"/>
<dbReference type="PATRIC" id="fig|190192.8.peg.405"/>
<dbReference type="HOGENOM" id="CLU_141199_2_0_2"/>
<dbReference type="InParanoid" id="Q8TYC3"/>
<dbReference type="OrthoDB" id="372011at2157"/>
<dbReference type="Proteomes" id="UP000001826">
    <property type="component" value="Chromosome"/>
</dbReference>
<dbReference type="GO" id="GO:1990904">
    <property type="term" value="C:ribonucleoprotein complex"/>
    <property type="evidence" value="ECO:0007669"/>
    <property type="project" value="UniProtKB-KW"/>
</dbReference>
<dbReference type="GO" id="GO:0005840">
    <property type="term" value="C:ribosome"/>
    <property type="evidence" value="ECO:0007669"/>
    <property type="project" value="UniProtKB-KW"/>
</dbReference>
<dbReference type="GO" id="GO:0070180">
    <property type="term" value="F:large ribosomal subunit rRNA binding"/>
    <property type="evidence" value="ECO:0007669"/>
    <property type="project" value="UniProtKB-UniRule"/>
</dbReference>
<dbReference type="GO" id="GO:0003735">
    <property type="term" value="F:structural constituent of ribosome"/>
    <property type="evidence" value="ECO:0007669"/>
    <property type="project" value="InterPro"/>
</dbReference>
<dbReference type="GO" id="GO:0008270">
    <property type="term" value="F:zinc ion binding"/>
    <property type="evidence" value="ECO:0007669"/>
    <property type="project" value="UniProtKB-UniRule"/>
</dbReference>
<dbReference type="GO" id="GO:0006412">
    <property type="term" value="P:translation"/>
    <property type="evidence" value="ECO:0007669"/>
    <property type="project" value="UniProtKB-UniRule"/>
</dbReference>
<dbReference type="Gene3D" id="2.20.25.30">
    <property type="match status" value="1"/>
</dbReference>
<dbReference type="HAMAP" id="MF_00327">
    <property type="entry name" value="Ribosomal_eL43"/>
    <property type="match status" value="1"/>
</dbReference>
<dbReference type="InterPro" id="IPR011331">
    <property type="entry name" value="Ribosomal_eL37/eL43"/>
</dbReference>
<dbReference type="InterPro" id="IPR002674">
    <property type="entry name" value="Ribosomal_eL43"/>
</dbReference>
<dbReference type="InterPro" id="IPR050522">
    <property type="entry name" value="Ribosomal_protein_eL43"/>
</dbReference>
<dbReference type="InterPro" id="IPR011332">
    <property type="entry name" value="Ribosomal_zn-bd"/>
</dbReference>
<dbReference type="NCBIfam" id="TIGR00280">
    <property type="entry name" value="eL43_euk_arch"/>
    <property type="match status" value="1"/>
</dbReference>
<dbReference type="NCBIfam" id="NF003058">
    <property type="entry name" value="PRK03976.1"/>
    <property type="match status" value="1"/>
</dbReference>
<dbReference type="PANTHER" id="PTHR48129">
    <property type="entry name" value="60S RIBOSOMAL PROTEIN L37A"/>
    <property type="match status" value="1"/>
</dbReference>
<dbReference type="PANTHER" id="PTHR48129:SF1">
    <property type="entry name" value="LARGE RIBOSOMAL SUBUNIT PROTEIN EL43"/>
    <property type="match status" value="1"/>
</dbReference>
<dbReference type="Pfam" id="PF01780">
    <property type="entry name" value="Ribosomal_L37ae"/>
    <property type="match status" value="1"/>
</dbReference>
<dbReference type="SUPFAM" id="SSF57829">
    <property type="entry name" value="Zn-binding ribosomal proteins"/>
    <property type="match status" value="1"/>
</dbReference>
<evidence type="ECO:0000255" key="1">
    <source>
        <dbReference type="HAMAP-Rule" id="MF_00327"/>
    </source>
</evidence>
<evidence type="ECO:0000305" key="2"/>
<name>RL37A_METKA</name>
<reference key="1">
    <citation type="journal article" date="2002" name="Proc. Natl. Acad. Sci. U.S.A.">
        <title>The complete genome of hyperthermophile Methanopyrus kandleri AV19 and monophyly of archaeal methanogens.</title>
        <authorList>
            <person name="Slesarev A.I."/>
            <person name="Mezhevaya K.V."/>
            <person name="Makarova K.S."/>
            <person name="Polushin N.N."/>
            <person name="Shcherbinina O.V."/>
            <person name="Shakhova V.V."/>
            <person name="Belova G.I."/>
            <person name="Aravind L."/>
            <person name="Natale D.A."/>
            <person name="Rogozin I.B."/>
            <person name="Tatusov R.L."/>
            <person name="Wolf Y.I."/>
            <person name="Stetter K.O."/>
            <person name="Malykh A.G."/>
            <person name="Koonin E.V."/>
            <person name="Kozyavkin S.A."/>
        </authorList>
    </citation>
    <scope>NUCLEOTIDE SEQUENCE [LARGE SCALE GENOMIC DNA]</scope>
    <source>
        <strain>AV19 / DSM 6324 / JCM 9639 / NBRC 100938</strain>
    </source>
</reference>
<proteinExistence type="inferred from homology"/>